<reference key="1">
    <citation type="journal article" date="2006" name="Genetics">
        <title>The molecular identities of the Caenorhabditis elegans intraflagellar transport genes dyf-6, daf-10 and osm-1.</title>
        <authorList>
            <person name="Bell L.R."/>
            <person name="Stone S."/>
            <person name="Yochem J."/>
            <person name="Shaw J.E."/>
            <person name="Herman R.K."/>
        </authorList>
    </citation>
    <scope>NUCLEOTIDE SEQUENCE [MRNA]</scope>
</reference>
<reference key="2">
    <citation type="journal article" date="1998" name="Science">
        <title>Genome sequence of the nematode C. elegans: a platform for investigating biology.</title>
        <authorList>
            <consortium name="The C. elegans sequencing consortium"/>
        </authorList>
    </citation>
    <scope>NUCLEOTIDE SEQUENCE [LARGE SCALE GENOMIC DNA]</scope>
    <source>
        <strain>Bristol N2</strain>
    </source>
</reference>
<reference key="3">
    <citation type="journal article" date="1999" name="J. Cell Biol.">
        <title>Role of a class DHC1b dynein in retrograde transport of IFT motors and IFT raft particles along cilia, but not dendrites, in chemosensory neurons of living Caenorhabditis elegans.</title>
        <authorList>
            <person name="Signor D."/>
            <person name="Wedaman K.P."/>
            <person name="Orozco J.T."/>
            <person name="Dwyer N.D."/>
            <person name="Bargmann C.I."/>
            <person name="Rose L.S."/>
            <person name="Scholey J.M."/>
        </authorList>
    </citation>
    <scope>FUNCTION</scope>
    <scope>SUBCELLULAR LOCATION</scope>
    <scope>DISRUPTION PHENOTYPE</scope>
    <scope>TISSUE SPECIFICITY</scope>
</reference>
<reference key="4">
    <citation type="journal article" date="2017" name="Curr. Biol.">
        <title>Dynein-driven retrograde intraflagellar transport is triphasic in C. elegans sensory cilia.</title>
        <authorList>
            <person name="Yi P."/>
            <person name="Li W.J."/>
            <person name="Dong M.Q."/>
            <person name="Ou G."/>
        </authorList>
    </citation>
    <scope>FUNCTION</scope>
    <scope>IDENTIFICATION IN IFT COMPLEX B</scope>
    <scope>IDENTIFICATION BY MASS SPECTROMETRY</scope>
</reference>
<proteinExistence type="evidence at protein level"/>
<name>OSM1_CAEEL</name>
<sequence length="1737" mass="195702">MKLKYLSTILPAQDGEAKISNISCSPNGSRAAIACSDRSVALLDENGVQKDRFTCKPIDAKYGKKSFTVLCMTFSPDSSRIAIGQSDNVLFIYKVGTSWNEKKVIVNKFVQPSAVTCLSWPFDDKILVGQLDGKVRIGLIKTNKCSSLYKTDETVVSIQTHPKRTSFVSAHQDGSIILYNFSSRTQSKICTLQVPPYNLVFTNHGLVVATSDRRVLSYTENGVVQQQFDYNDQSEKEFSSISCDPTAQNVVVASYDRLRLFSWSARRGAWDEGAPLEIQNAYTIGALGWKMDGSTIYAGTVCGGVFSVDCCLRRGMLKSRFETTYVAPSHVILRDVTNDTRTNVISNKGLAIDELKIMGKDRYVIGYTSSSIIIADTESQRFSELEWQSGGHEKFYFDFNNCCLIINAGEVTVVEYGVDGSLGWVRTELTSPHLLSVQVSGPDVEEHKKVKKLAYLVDPTTISIINLINGQQESFINHTGAVDWIELNERASKLLYRDKRSKVTLVDISSDQRSVLLSFCTYVQWVPMSDVIVAQSGDNLSIWYNPDLPEQVTNMKIKGEVEAVLRDADRTEVIVQEPTAKVAYELDNTQIEFGAALEKRDFDRAVAFLESNTSGTDAYSMWIRVAEMALEHGNLFVAQRCYAAINDVAKVRKLHDILEIADEASISIGGDGTHFYKVRAMLAIMGRKFKEAERIFLEQNDTESAIGMYTSLHKWDEALELAKVLNYPEYEQLKTSYLRALSDTGQDSKAAELKVSDGDTLSAIQLYIKSNKPLSALSAANNDSVLSQDENILRQIADSLVKSQLYDKAGDVYEKLKDFDKAVEYFKKGDAYGKAIQLARFAFPEKVVTLEQEWGLHLEYIGQYDAAVNHFVEANDLKKAVEAAIRAKEWPKALSIVENIQDQKVRTGYYGEIADHYSNKGDFERAERLFVEAGLFNDAIMMYGKNNKWIDAFRLSEEFHGREATISSYLAKAEDLDEHGRFAEAEQLYITIGMPHKAIQMYDRVGRDDDVLRLVERYHGEHMHETRKRFATQYEERGDLKAAEEQFLKAGDFRSAVNMYKDSEMWSDAYRIAKTEGGENMEKQVLFMWAKSIGGDAAVKLLNKHGMLMEGIDFACETGAFDLAFDLARIGAKDRMGTVHVRLATQLEEEGRLEDASKHYVEGNKPELAVEMFIRDNDWADAERVAKDHCESLLPDVYTGQARRAIEEGDHLRAETFLLRANKPDIILRYFIENEMWPDALRIAQNYLPHQAALIQEEYEKSELRNGARGVDSFVAQAKEWEQQGDWRKAVSALLKINRDSTDNDALIKHSTEKAADLVMKFLMGDEEYIGAALGALDEANCNEKAAELLLLFGQSRQAINALCRAKQWAKAKQVAQEYLPEMVPEIEKIYKESLKSEGRLGELIDVDVITAIDMMIENDQWDKALDTAKSQNYRPLLDKYVAQYAAILVHRNDLSRVLAVLERYGASANPANFSIYKLLMEETLAKPRFDYTEIARVRNVHLDVYNALQKESSEHFEEFSRALWALHLIAMRTALEEIGDSVPEVQKLCLKQSLSLLRYTDILVADRIFYEAGAAAKDYGSEYESLGFLLLNHYLDLVDAIEEGNGELVDYSPFENSDIPTEVSLPTRQWLESAKHEEMKEWVLASSVDDAHAKELVYDKRGVFEASLKDKRGTAEPCLVTGYPVIESTVRIGSMVAEKDNLNKFLVVIKSNQTENLLNVQNFVAKWAGSPLAISL</sequence>
<evidence type="ECO:0000269" key="1">
    <source>
    </source>
</evidence>
<evidence type="ECO:0000269" key="2">
    <source>
    </source>
</evidence>
<evidence type="ECO:0000305" key="3"/>
<evidence type="ECO:0000312" key="4">
    <source>
        <dbReference type="WormBase" id="T27B1.1"/>
    </source>
</evidence>
<accession>Q22830</accession>
<accession>Q1KYP6</accession>
<gene>
    <name evidence="4" type="primary">osm-1</name>
    <name evidence="4" type="ORF">T27B1.1</name>
</gene>
<keyword id="KW-0966">Cell projection</keyword>
<keyword id="KW-0969">Cilium</keyword>
<keyword id="KW-0217">Developmental protein</keyword>
<keyword id="KW-1185">Reference proteome</keyword>
<keyword id="KW-0677">Repeat</keyword>
<keyword id="KW-0802">TPR repeat</keyword>
<keyword id="KW-0853">WD repeat</keyword>
<protein>
    <recommendedName>
        <fullName>Intraflagellar transport protein osm-1</fullName>
    </recommendedName>
    <alternativeName>
        <fullName>Osmotic avoidance abnormal protein 1</fullName>
    </alternativeName>
</protein>
<organism>
    <name type="scientific">Caenorhabditis elegans</name>
    <dbReference type="NCBI Taxonomy" id="6239"/>
    <lineage>
        <taxon>Eukaryota</taxon>
        <taxon>Metazoa</taxon>
        <taxon>Ecdysozoa</taxon>
        <taxon>Nematoda</taxon>
        <taxon>Chromadorea</taxon>
        <taxon>Rhabditida</taxon>
        <taxon>Rhabditina</taxon>
        <taxon>Rhabditomorpha</taxon>
        <taxon>Rhabditoidea</taxon>
        <taxon>Rhabditidae</taxon>
        <taxon>Peloderinae</taxon>
        <taxon>Caenorhabditis</taxon>
    </lineage>
</organism>
<comment type="function">
    <text evidence="1 2">Component of the intraflagellar transport (IFT) complex B required for transport of proteins in the motile cilium (PubMed:28479320). May be required for ciliary entrance and transport of specific ciliary cargo proteins such as che-3 which are related to motility (PubMed:28479320). Required for the maintenance and formation of chemosensory cilia that detect chemosensory cues (PubMed:10545497).</text>
</comment>
<comment type="subunit">
    <text evidence="2">Component of the IFT complex B composed of at least che-2, che-13, dyf-1, dyf-3, dyf-6, dyf-11, dyf-13, ift-20, ift-74, ift-81, ifta-2, osm-1, osm-5 and osm-6.</text>
</comment>
<comment type="subcellular location">
    <subcellularLocation>
        <location evidence="1">Cell projection</location>
        <location evidence="1">Cilium</location>
    </subcellularLocation>
    <text>Emerges from the transition zones and move in a bidirectional fashion along the sensory cilia, displaying anterograde movement from the transition zone toward the tip of the ciliary axoneme and retrograde movement from the cilium tip back toward the transition zone.</text>
</comment>
<comment type="tissue specificity">
    <text evidence="1">Expressed in amphid and phasmid chemosensory neurons, where it appears to concentrate at the base of the transition zones, which correspond to the basal bodies of motile and sensory cilia. Moves in the retrograde direction along cilia and dendrites, suggesting that it is retrieved from the distal endings of the cilia by a retrograde transport pathway that moves it along cilia and then dendrites, back to the neuronal cell body.</text>
</comment>
<comment type="disruption phenotype">
    <text evidence="1">Worms display defects in ciliary structure resulting in defects in ability and osmotic avoidance behavior.</text>
</comment>
<comment type="similarity">
    <text evidence="3">Belongs to the IFT172 family.</text>
</comment>
<feature type="chain" id="PRO_0000328945" description="Intraflagellar transport protein osm-1">
    <location>
        <begin position="1"/>
        <end position="1737"/>
    </location>
</feature>
<feature type="repeat" description="WD 1">
    <location>
        <begin position="14"/>
        <end position="53"/>
    </location>
</feature>
<feature type="repeat" description="WD 2">
    <location>
        <begin position="63"/>
        <end position="103"/>
    </location>
</feature>
<feature type="repeat" description="WD 3">
    <location>
        <begin position="110"/>
        <end position="150"/>
    </location>
</feature>
<feature type="repeat" description="WD 4">
    <location>
        <begin position="151"/>
        <end position="189"/>
    </location>
</feature>
<feature type="repeat" description="WD 5">
    <location>
        <begin position="191"/>
        <end position="229"/>
    </location>
</feature>
<feature type="repeat" description="WD 6">
    <location>
        <begin position="233"/>
        <end position="273"/>
    </location>
</feature>
<feature type="repeat" description="WD 7">
    <location>
        <begin position="511"/>
        <end position="553"/>
    </location>
</feature>
<feature type="repeat" description="TPR 1">
    <location>
        <begin position="700"/>
        <end position="737"/>
    </location>
</feature>
<feature type="repeat" description="TPR 2">
    <location>
        <begin position="803"/>
        <end position="836"/>
    </location>
</feature>
<feature type="repeat" description="TPR 3">
    <location>
        <begin position="848"/>
        <end position="881"/>
    </location>
</feature>
<feature type="repeat" description="TPR 4">
    <location>
        <begin position="907"/>
        <end position="940"/>
    </location>
</feature>
<feature type="repeat" description="TPR 5">
    <location>
        <begin position="979"/>
        <end position="1012"/>
    </location>
</feature>
<feature type="repeat" description="TPR 6">
    <location>
        <begin position="1037"/>
        <end position="1070"/>
    </location>
</feature>
<feature type="repeat" description="TPR 7">
    <location>
        <begin position="1137"/>
        <end position="1170"/>
    </location>
</feature>
<dbReference type="EMBL" id="DQ360811">
    <property type="protein sequence ID" value="ABC88648.1"/>
    <property type="molecule type" value="mRNA"/>
</dbReference>
<dbReference type="EMBL" id="FO081607">
    <property type="protein sequence ID" value="CCD72791.1"/>
    <property type="molecule type" value="Genomic_DNA"/>
</dbReference>
<dbReference type="RefSeq" id="NP_510681.4">
    <property type="nucleotide sequence ID" value="NM_078280.6"/>
</dbReference>
<dbReference type="SMR" id="Q22830"/>
<dbReference type="BioGRID" id="46599">
    <property type="interactions" value="8"/>
</dbReference>
<dbReference type="ComplexPortal" id="CPX-1290">
    <property type="entry name" value="Intraflagellar transport complex B"/>
</dbReference>
<dbReference type="FunCoup" id="Q22830">
    <property type="interactions" value="354"/>
</dbReference>
<dbReference type="STRING" id="6239.T27B1.1.1"/>
<dbReference type="PaxDb" id="6239-T27B1.1"/>
<dbReference type="PeptideAtlas" id="Q22830"/>
<dbReference type="EnsemblMetazoa" id="T27B1.1.1">
    <property type="protein sequence ID" value="T27B1.1.1"/>
    <property type="gene ID" value="WBGene00003883"/>
</dbReference>
<dbReference type="GeneID" id="181715"/>
<dbReference type="KEGG" id="cel:CELE_T27B1.1"/>
<dbReference type="UCSC" id="T27B1.1">
    <property type="organism name" value="c. elegans"/>
</dbReference>
<dbReference type="AGR" id="WB:WBGene00003883"/>
<dbReference type="CTD" id="181715"/>
<dbReference type="WormBase" id="T27B1.1">
    <property type="protein sequence ID" value="CE41845"/>
    <property type="gene ID" value="WBGene00003883"/>
    <property type="gene designation" value="osm-1"/>
</dbReference>
<dbReference type="eggNOG" id="KOG3616">
    <property type="taxonomic scope" value="Eukaryota"/>
</dbReference>
<dbReference type="GeneTree" id="ENSGT00940000153417"/>
<dbReference type="HOGENOM" id="CLU_002716_0_0_1"/>
<dbReference type="InParanoid" id="Q22830"/>
<dbReference type="OMA" id="LKRTIWQ"/>
<dbReference type="OrthoDB" id="2186662at2759"/>
<dbReference type="PhylomeDB" id="Q22830"/>
<dbReference type="Reactome" id="R-CEL-5620924">
    <property type="pathway name" value="Intraflagellar transport"/>
</dbReference>
<dbReference type="PRO" id="PR:Q22830"/>
<dbReference type="Proteomes" id="UP000001940">
    <property type="component" value="Chromosome X"/>
</dbReference>
<dbReference type="Bgee" id="WBGene00003883">
    <property type="expression patterns" value="Expressed in pharyngeal muscle cell (C elegans) and 3 other cell types or tissues"/>
</dbReference>
<dbReference type="GO" id="GO:0005930">
    <property type="term" value="C:axoneme"/>
    <property type="evidence" value="ECO:0000318"/>
    <property type="project" value="GO_Central"/>
</dbReference>
<dbReference type="GO" id="GO:0036064">
    <property type="term" value="C:ciliary basal body"/>
    <property type="evidence" value="ECO:0000318"/>
    <property type="project" value="GO_Central"/>
</dbReference>
<dbReference type="GO" id="GO:0035869">
    <property type="term" value="C:ciliary transition zone"/>
    <property type="evidence" value="ECO:0000314"/>
    <property type="project" value="WormBase"/>
</dbReference>
<dbReference type="GO" id="GO:0005929">
    <property type="term" value="C:cilium"/>
    <property type="evidence" value="ECO:0000250"/>
    <property type="project" value="UniProtKB"/>
</dbReference>
<dbReference type="GO" id="GO:0030992">
    <property type="term" value="C:intraciliary transport particle B"/>
    <property type="evidence" value="ECO:0000314"/>
    <property type="project" value="WormBase"/>
</dbReference>
<dbReference type="GO" id="GO:0097730">
    <property type="term" value="C:non-motile cilium"/>
    <property type="evidence" value="ECO:0000314"/>
    <property type="project" value="WormBase"/>
</dbReference>
<dbReference type="GO" id="GO:0060271">
    <property type="term" value="P:cilium assembly"/>
    <property type="evidence" value="ECO:0000316"/>
    <property type="project" value="UniProtKB"/>
</dbReference>
<dbReference type="GO" id="GO:0043053">
    <property type="term" value="P:dauer entry"/>
    <property type="evidence" value="ECO:0000316"/>
    <property type="project" value="UniProtKB"/>
</dbReference>
<dbReference type="GO" id="GO:0042073">
    <property type="term" value="P:intraciliary transport"/>
    <property type="evidence" value="ECO:0000318"/>
    <property type="project" value="GO_Central"/>
</dbReference>
<dbReference type="GO" id="GO:1905515">
    <property type="term" value="P:non-motile cilium assembly"/>
    <property type="evidence" value="ECO:0000315"/>
    <property type="project" value="WormBase"/>
</dbReference>
<dbReference type="FunFam" id="1.25.40.470:FF:000008">
    <property type="entry name" value="Intraflagellar transport protein 172 homolog"/>
    <property type="match status" value="1"/>
</dbReference>
<dbReference type="FunFam" id="1.25.40.470:FF:000030">
    <property type="entry name" value="Intraflagellar transport protein osm-1"/>
    <property type="match status" value="1"/>
</dbReference>
<dbReference type="FunFam" id="1.25.40.470:FF:000040">
    <property type="entry name" value="Intraflagellar transport protein osm-1"/>
    <property type="match status" value="1"/>
</dbReference>
<dbReference type="FunFam" id="2.130.10.10:FF:002523">
    <property type="entry name" value="Intraflagellar transport protein osm-1"/>
    <property type="match status" value="1"/>
</dbReference>
<dbReference type="Gene3D" id="1.25.40.470">
    <property type="match status" value="3"/>
</dbReference>
<dbReference type="Gene3D" id="1.25.40.10">
    <property type="entry name" value="Tetratricopeptide repeat domain"/>
    <property type="match status" value="1"/>
</dbReference>
<dbReference type="Gene3D" id="2.130.10.10">
    <property type="entry name" value="YVTN repeat-like/Quinoprotein amine dehydrogenase"/>
    <property type="match status" value="2"/>
</dbReference>
<dbReference type="InterPro" id="IPR011990">
    <property type="entry name" value="TPR-like_helical_dom_sf"/>
</dbReference>
<dbReference type="InterPro" id="IPR056168">
    <property type="entry name" value="TPR_IF140/IFT172/WDR19"/>
</dbReference>
<dbReference type="InterPro" id="IPR056157">
    <property type="entry name" value="TPR_IFT80_172_dom"/>
</dbReference>
<dbReference type="InterPro" id="IPR015943">
    <property type="entry name" value="WD40/YVTN_repeat-like_dom_sf"/>
</dbReference>
<dbReference type="InterPro" id="IPR036322">
    <property type="entry name" value="WD40_repeat_dom_sf"/>
</dbReference>
<dbReference type="InterPro" id="IPR001680">
    <property type="entry name" value="WD40_rpt"/>
</dbReference>
<dbReference type="PANTHER" id="PTHR15722">
    <property type="entry name" value="IFT140/172-RELATED"/>
    <property type="match status" value="1"/>
</dbReference>
<dbReference type="PANTHER" id="PTHR15722:SF2">
    <property type="entry name" value="INTRAFLAGELLAR TRANSPORT PROTEIN 172 HOMOLOG"/>
    <property type="match status" value="1"/>
</dbReference>
<dbReference type="Pfam" id="PF24762">
    <property type="entry name" value="TPR_IF140-IFT172"/>
    <property type="match status" value="2"/>
</dbReference>
<dbReference type="Pfam" id="PF23387">
    <property type="entry name" value="TPR_IFT80_172"/>
    <property type="match status" value="1"/>
</dbReference>
<dbReference type="Pfam" id="PF00400">
    <property type="entry name" value="WD40"/>
    <property type="match status" value="1"/>
</dbReference>
<dbReference type="SMART" id="SM00320">
    <property type="entry name" value="WD40"/>
    <property type="match status" value="6"/>
</dbReference>
<dbReference type="SUPFAM" id="SSF69322">
    <property type="entry name" value="Tricorn protease domain 2"/>
    <property type="match status" value="1"/>
</dbReference>
<dbReference type="SUPFAM" id="SSF50978">
    <property type="entry name" value="WD40 repeat-like"/>
    <property type="match status" value="1"/>
</dbReference>